<keyword id="KW-0012">Acyltransferase</keyword>
<keyword id="KW-0963">Cytoplasm</keyword>
<keyword id="KW-0408">Iron</keyword>
<keyword id="KW-0479">Metal-binding</keyword>
<keyword id="KW-1185">Reference proteome</keyword>
<keyword id="KW-0808">Transferase</keyword>
<keyword id="KW-0819">tRNA processing</keyword>
<gene>
    <name evidence="1" type="primary">tsaD</name>
    <name type="synonym">gcp</name>
    <name type="ordered locus">CJA_0768</name>
</gene>
<feature type="chain" id="PRO_1000145959" description="tRNA N6-adenosine threonylcarbamoyltransferase">
    <location>
        <begin position="1"/>
        <end position="342"/>
    </location>
</feature>
<feature type="binding site" evidence="1">
    <location>
        <position position="111"/>
    </location>
    <ligand>
        <name>Fe cation</name>
        <dbReference type="ChEBI" id="CHEBI:24875"/>
    </ligand>
</feature>
<feature type="binding site" evidence="1">
    <location>
        <position position="115"/>
    </location>
    <ligand>
        <name>Fe cation</name>
        <dbReference type="ChEBI" id="CHEBI:24875"/>
    </ligand>
</feature>
<feature type="binding site" evidence="1">
    <location>
        <begin position="134"/>
        <end position="138"/>
    </location>
    <ligand>
        <name>substrate</name>
    </ligand>
</feature>
<feature type="binding site" evidence="1">
    <location>
        <position position="167"/>
    </location>
    <ligand>
        <name>substrate</name>
    </ligand>
</feature>
<feature type="binding site" evidence="1">
    <location>
        <position position="180"/>
    </location>
    <ligand>
        <name>substrate</name>
    </ligand>
</feature>
<feature type="binding site" evidence="1">
    <location>
        <position position="277"/>
    </location>
    <ligand>
        <name>substrate</name>
    </ligand>
</feature>
<feature type="binding site" evidence="1">
    <location>
        <position position="305"/>
    </location>
    <ligand>
        <name>Fe cation</name>
        <dbReference type="ChEBI" id="CHEBI:24875"/>
    </ligand>
</feature>
<comment type="function">
    <text evidence="1">Required for the formation of a threonylcarbamoyl group on adenosine at position 37 (t(6)A37) in tRNAs that read codons beginning with adenine. Is involved in the transfer of the threonylcarbamoyl moiety of threonylcarbamoyl-AMP (TC-AMP) to the N6 group of A37, together with TsaE and TsaB. TsaD likely plays a direct catalytic role in this reaction.</text>
</comment>
<comment type="catalytic activity">
    <reaction evidence="1">
        <text>L-threonylcarbamoyladenylate + adenosine(37) in tRNA = N(6)-L-threonylcarbamoyladenosine(37) in tRNA + AMP + H(+)</text>
        <dbReference type="Rhea" id="RHEA:37059"/>
        <dbReference type="Rhea" id="RHEA-COMP:10162"/>
        <dbReference type="Rhea" id="RHEA-COMP:10163"/>
        <dbReference type="ChEBI" id="CHEBI:15378"/>
        <dbReference type="ChEBI" id="CHEBI:73682"/>
        <dbReference type="ChEBI" id="CHEBI:74411"/>
        <dbReference type="ChEBI" id="CHEBI:74418"/>
        <dbReference type="ChEBI" id="CHEBI:456215"/>
        <dbReference type="EC" id="2.3.1.234"/>
    </reaction>
</comment>
<comment type="cofactor">
    <cofactor evidence="1">
        <name>Fe(2+)</name>
        <dbReference type="ChEBI" id="CHEBI:29033"/>
    </cofactor>
    <text evidence="1">Binds 1 Fe(2+) ion per subunit.</text>
</comment>
<comment type="subcellular location">
    <subcellularLocation>
        <location evidence="1">Cytoplasm</location>
    </subcellularLocation>
</comment>
<comment type="similarity">
    <text evidence="1">Belongs to the KAE1 / TsaD family.</text>
</comment>
<proteinExistence type="inferred from homology"/>
<sequence>MRVLGLETSCDETGVAVYDSAQGLLAHRLYSQVKLHAEYGGVVPELASRDHVRKLLPLIDEVMAASGSTAADIDAIAYTAGPGLIGALMVGAAFGRSLAYAWGIPAVGVHHMEGHLLAPMLEAVPPEFPFVALLVSGGHTQLVKVMAIGDYELLGESIDDAAGEAFDKAAKMLDLDYPGGPQIARLAEQGVHGRFKFPRPMVDRPGLAFSFSGLKTATLTAVNAHKQANGLPDDQTCADIACAFQEAVVDTLVIKCRRALEQTGMKTLVIAGGVSANKKLRADLEVELARIGARVFYARHEFCTDNGAMIAYAGCQRLLAGQQEGLAIHVKARWPLNSLSSL</sequence>
<accession>B3PKA5</accession>
<name>TSAD_CELJU</name>
<dbReference type="EC" id="2.3.1.234" evidence="1"/>
<dbReference type="EMBL" id="CP000934">
    <property type="protein sequence ID" value="ACE85296.1"/>
    <property type="molecule type" value="Genomic_DNA"/>
</dbReference>
<dbReference type="RefSeq" id="WP_012486430.1">
    <property type="nucleotide sequence ID" value="NC_010995.1"/>
</dbReference>
<dbReference type="SMR" id="B3PKA5"/>
<dbReference type="STRING" id="498211.CJA_0768"/>
<dbReference type="KEGG" id="cja:CJA_0768"/>
<dbReference type="eggNOG" id="COG0533">
    <property type="taxonomic scope" value="Bacteria"/>
</dbReference>
<dbReference type="HOGENOM" id="CLU_023208_0_2_6"/>
<dbReference type="OrthoDB" id="9806197at2"/>
<dbReference type="Proteomes" id="UP000001036">
    <property type="component" value="Chromosome"/>
</dbReference>
<dbReference type="GO" id="GO:0005737">
    <property type="term" value="C:cytoplasm"/>
    <property type="evidence" value="ECO:0007669"/>
    <property type="project" value="UniProtKB-SubCell"/>
</dbReference>
<dbReference type="GO" id="GO:0005506">
    <property type="term" value="F:iron ion binding"/>
    <property type="evidence" value="ECO:0007669"/>
    <property type="project" value="UniProtKB-UniRule"/>
</dbReference>
<dbReference type="GO" id="GO:0061711">
    <property type="term" value="F:N(6)-L-threonylcarbamoyladenine synthase activity"/>
    <property type="evidence" value="ECO:0007669"/>
    <property type="project" value="UniProtKB-EC"/>
</dbReference>
<dbReference type="GO" id="GO:0002949">
    <property type="term" value="P:tRNA threonylcarbamoyladenosine modification"/>
    <property type="evidence" value="ECO:0007669"/>
    <property type="project" value="UniProtKB-UniRule"/>
</dbReference>
<dbReference type="CDD" id="cd24133">
    <property type="entry name" value="ASKHA_NBD_TsaD_bac"/>
    <property type="match status" value="1"/>
</dbReference>
<dbReference type="FunFam" id="3.30.420.40:FF:000012">
    <property type="entry name" value="tRNA N6-adenosine threonylcarbamoyltransferase"/>
    <property type="match status" value="1"/>
</dbReference>
<dbReference type="FunFam" id="3.30.420.40:FF:000031">
    <property type="entry name" value="tRNA N6-adenosine threonylcarbamoyltransferase"/>
    <property type="match status" value="1"/>
</dbReference>
<dbReference type="Gene3D" id="3.30.420.40">
    <property type="match status" value="2"/>
</dbReference>
<dbReference type="HAMAP" id="MF_01445">
    <property type="entry name" value="TsaD"/>
    <property type="match status" value="1"/>
</dbReference>
<dbReference type="InterPro" id="IPR043129">
    <property type="entry name" value="ATPase_NBD"/>
</dbReference>
<dbReference type="InterPro" id="IPR000905">
    <property type="entry name" value="Gcp-like_dom"/>
</dbReference>
<dbReference type="InterPro" id="IPR017861">
    <property type="entry name" value="KAE1/TsaD"/>
</dbReference>
<dbReference type="InterPro" id="IPR017860">
    <property type="entry name" value="Peptidase_M22_CS"/>
</dbReference>
<dbReference type="InterPro" id="IPR022450">
    <property type="entry name" value="TsaD"/>
</dbReference>
<dbReference type="NCBIfam" id="TIGR00329">
    <property type="entry name" value="gcp_kae1"/>
    <property type="match status" value="1"/>
</dbReference>
<dbReference type="NCBIfam" id="TIGR03723">
    <property type="entry name" value="T6A_TsaD_YgjD"/>
    <property type="match status" value="1"/>
</dbReference>
<dbReference type="PANTHER" id="PTHR11735">
    <property type="entry name" value="TRNA N6-ADENOSINE THREONYLCARBAMOYLTRANSFERASE"/>
    <property type="match status" value="1"/>
</dbReference>
<dbReference type="PANTHER" id="PTHR11735:SF6">
    <property type="entry name" value="TRNA N6-ADENOSINE THREONYLCARBAMOYLTRANSFERASE, MITOCHONDRIAL"/>
    <property type="match status" value="1"/>
</dbReference>
<dbReference type="Pfam" id="PF00814">
    <property type="entry name" value="TsaD"/>
    <property type="match status" value="1"/>
</dbReference>
<dbReference type="PRINTS" id="PR00789">
    <property type="entry name" value="OSIALOPTASE"/>
</dbReference>
<dbReference type="SUPFAM" id="SSF53067">
    <property type="entry name" value="Actin-like ATPase domain"/>
    <property type="match status" value="2"/>
</dbReference>
<dbReference type="PROSITE" id="PS01016">
    <property type="entry name" value="GLYCOPROTEASE"/>
    <property type="match status" value="1"/>
</dbReference>
<organism>
    <name type="scientific">Cellvibrio japonicus (strain Ueda107)</name>
    <name type="common">Pseudomonas fluorescens subsp. cellulosa</name>
    <dbReference type="NCBI Taxonomy" id="498211"/>
    <lineage>
        <taxon>Bacteria</taxon>
        <taxon>Pseudomonadati</taxon>
        <taxon>Pseudomonadota</taxon>
        <taxon>Gammaproteobacteria</taxon>
        <taxon>Cellvibrionales</taxon>
        <taxon>Cellvibrionaceae</taxon>
        <taxon>Cellvibrio</taxon>
    </lineage>
</organism>
<evidence type="ECO:0000255" key="1">
    <source>
        <dbReference type="HAMAP-Rule" id="MF_01445"/>
    </source>
</evidence>
<protein>
    <recommendedName>
        <fullName evidence="1">tRNA N6-adenosine threonylcarbamoyltransferase</fullName>
        <ecNumber evidence="1">2.3.1.234</ecNumber>
    </recommendedName>
    <alternativeName>
        <fullName evidence="1">N6-L-threonylcarbamoyladenine synthase</fullName>
        <shortName evidence="1">t(6)A synthase</shortName>
    </alternativeName>
    <alternativeName>
        <fullName evidence="1">t(6)A37 threonylcarbamoyladenosine biosynthesis protein TsaD</fullName>
    </alternativeName>
    <alternativeName>
        <fullName evidence="1">tRNA threonylcarbamoyladenosine biosynthesis protein TsaD</fullName>
    </alternativeName>
</protein>
<reference key="1">
    <citation type="journal article" date="2008" name="J. Bacteriol.">
        <title>Insights into plant cell wall degradation from the genome sequence of the soil bacterium Cellvibrio japonicus.</title>
        <authorList>
            <person name="DeBoy R.T."/>
            <person name="Mongodin E.F."/>
            <person name="Fouts D.E."/>
            <person name="Tailford L.E."/>
            <person name="Khouri H."/>
            <person name="Emerson J.B."/>
            <person name="Mohamoud Y."/>
            <person name="Watkins K."/>
            <person name="Henrissat B."/>
            <person name="Gilbert H.J."/>
            <person name="Nelson K.E."/>
        </authorList>
    </citation>
    <scope>NUCLEOTIDE SEQUENCE [LARGE SCALE GENOMIC DNA]</scope>
    <source>
        <strain>Ueda107</strain>
    </source>
</reference>